<keyword id="KW-0150">Chloroplast</keyword>
<keyword id="KW-0934">Plastid</keyword>
<keyword id="KW-0687">Ribonucleoprotein</keyword>
<keyword id="KW-0689">Ribosomal protein</keyword>
<dbReference type="EMBL" id="AB189069">
    <property type="protein sequence ID" value="BAD93470.1"/>
    <property type="molecule type" value="Genomic_DNA"/>
</dbReference>
<dbReference type="RefSeq" id="YP_005089617.1">
    <property type="nucleotide sequence ID" value="NC_016730.1"/>
</dbReference>
<dbReference type="RefSeq" id="YP_005089636.1">
    <property type="nucleotide sequence ID" value="NC_016730.1"/>
</dbReference>
<dbReference type="SMR" id="Q589A7"/>
<dbReference type="GeneID" id="11541115"/>
<dbReference type="GeneID" id="11541161"/>
<dbReference type="GO" id="GO:0009507">
    <property type="term" value="C:chloroplast"/>
    <property type="evidence" value="ECO:0007669"/>
    <property type="project" value="UniProtKB-SubCell"/>
</dbReference>
<dbReference type="GO" id="GO:0005762">
    <property type="term" value="C:mitochondrial large ribosomal subunit"/>
    <property type="evidence" value="ECO:0007669"/>
    <property type="project" value="TreeGrafter"/>
</dbReference>
<dbReference type="GO" id="GO:0019843">
    <property type="term" value="F:rRNA binding"/>
    <property type="evidence" value="ECO:0007669"/>
    <property type="project" value="UniProtKB-UniRule"/>
</dbReference>
<dbReference type="GO" id="GO:0003735">
    <property type="term" value="F:structural constituent of ribosome"/>
    <property type="evidence" value="ECO:0007669"/>
    <property type="project" value="InterPro"/>
</dbReference>
<dbReference type="GO" id="GO:0016740">
    <property type="term" value="F:transferase activity"/>
    <property type="evidence" value="ECO:0007669"/>
    <property type="project" value="InterPro"/>
</dbReference>
<dbReference type="GO" id="GO:0032543">
    <property type="term" value="P:mitochondrial translation"/>
    <property type="evidence" value="ECO:0007669"/>
    <property type="project" value="TreeGrafter"/>
</dbReference>
<dbReference type="FunFam" id="4.10.950.10:FF:000001">
    <property type="entry name" value="50S ribosomal protein L2"/>
    <property type="match status" value="1"/>
</dbReference>
<dbReference type="FunFam" id="2.30.30.30:FF:000008">
    <property type="entry name" value="50S ribosomal protein L2, chloroplastic"/>
    <property type="match status" value="1"/>
</dbReference>
<dbReference type="FunFam" id="2.40.50.140:FF:000029">
    <property type="entry name" value="50S ribosomal protein L2, chloroplastic"/>
    <property type="match status" value="1"/>
</dbReference>
<dbReference type="Gene3D" id="2.30.30.30">
    <property type="match status" value="1"/>
</dbReference>
<dbReference type="Gene3D" id="2.40.50.140">
    <property type="entry name" value="Nucleic acid-binding proteins"/>
    <property type="match status" value="1"/>
</dbReference>
<dbReference type="Gene3D" id="4.10.950.10">
    <property type="entry name" value="Ribosomal protein L2, domain 3"/>
    <property type="match status" value="1"/>
</dbReference>
<dbReference type="HAMAP" id="MF_01320_B">
    <property type="entry name" value="Ribosomal_uL2_B"/>
    <property type="match status" value="1"/>
</dbReference>
<dbReference type="InterPro" id="IPR012340">
    <property type="entry name" value="NA-bd_OB-fold"/>
</dbReference>
<dbReference type="InterPro" id="IPR014722">
    <property type="entry name" value="Rib_uL2_dom2"/>
</dbReference>
<dbReference type="InterPro" id="IPR002171">
    <property type="entry name" value="Ribosomal_uL2"/>
</dbReference>
<dbReference type="InterPro" id="IPR005880">
    <property type="entry name" value="Ribosomal_uL2_bac/org-type"/>
</dbReference>
<dbReference type="InterPro" id="IPR022669">
    <property type="entry name" value="Ribosomal_uL2_C"/>
</dbReference>
<dbReference type="InterPro" id="IPR022671">
    <property type="entry name" value="Ribosomal_uL2_CS"/>
</dbReference>
<dbReference type="InterPro" id="IPR014726">
    <property type="entry name" value="Ribosomal_uL2_dom3"/>
</dbReference>
<dbReference type="InterPro" id="IPR022666">
    <property type="entry name" value="Ribosomal_uL2_RNA-bd_dom"/>
</dbReference>
<dbReference type="InterPro" id="IPR008991">
    <property type="entry name" value="Translation_prot_SH3-like_sf"/>
</dbReference>
<dbReference type="NCBIfam" id="TIGR01171">
    <property type="entry name" value="rplB_bact"/>
    <property type="match status" value="1"/>
</dbReference>
<dbReference type="PANTHER" id="PTHR13691:SF5">
    <property type="entry name" value="LARGE RIBOSOMAL SUBUNIT PROTEIN UL2M"/>
    <property type="match status" value="1"/>
</dbReference>
<dbReference type="PANTHER" id="PTHR13691">
    <property type="entry name" value="RIBOSOMAL PROTEIN L2"/>
    <property type="match status" value="1"/>
</dbReference>
<dbReference type="Pfam" id="PF00181">
    <property type="entry name" value="Ribosomal_L2"/>
    <property type="match status" value="1"/>
</dbReference>
<dbReference type="Pfam" id="PF03947">
    <property type="entry name" value="Ribosomal_L2_C"/>
    <property type="match status" value="1"/>
</dbReference>
<dbReference type="PIRSF" id="PIRSF002158">
    <property type="entry name" value="Ribosomal_L2"/>
    <property type="match status" value="1"/>
</dbReference>
<dbReference type="SMART" id="SM01383">
    <property type="entry name" value="Ribosomal_L2"/>
    <property type="match status" value="1"/>
</dbReference>
<dbReference type="SMART" id="SM01382">
    <property type="entry name" value="Ribosomal_L2_C"/>
    <property type="match status" value="1"/>
</dbReference>
<dbReference type="SUPFAM" id="SSF50249">
    <property type="entry name" value="Nucleic acid-binding proteins"/>
    <property type="match status" value="1"/>
</dbReference>
<dbReference type="SUPFAM" id="SSF50104">
    <property type="entry name" value="Translation proteins SH3-like domain"/>
    <property type="match status" value="1"/>
</dbReference>
<dbReference type="PROSITE" id="PS00467">
    <property type="entry name" value="RIBOSOMAL_L2"/>
    <property type="match status" value="1"/>
</dbReference>
<sequence>MAIHLYKTSTPSTRNGAVDNQVKSNPRNNLIYGQRRCGKGRNARGIITARHRGGGHKRLYRKIDFRRNEKDIYGRIVTIEYDPNRNAYICLIHYGDGEKRYILHPRGAIIGDTIVSGTEVPIKMGNALPLTDMPLGTAIHNIEITLGKGGQLARAAGAVAKLIAKEGKSATLKLPSGEVRLISKNCSATVGQVGNVGVNQKSLGRAGSKRWLGKRPVVRGVVMNPVDHPHGGGEGRAPIGRKNPTTPWGYPALGKRSRKRNKYSDNFIIRRRSK</sequence>
<evidence type="ECO:0000250" key="1"/>
<evidence type="ECO:0000255" key="2">
    <source>
        <dbReference type="HAMAP-Rule" id="MF_01320"/>
    </source>
</evidence>
<evidence type="ECO:0000256" key="3">
    <source>
        <dbReference type="SAM" id="MobiDB-lite"/>
    </source>
</evidence>
<evidence type="ECO:0000305" key="4"/>
<feature type="chain" id="PRO_0000129703" description="Large ribosomal subunit protein uL2c">
    <location>
        <begin position="1"/>
        <end position="274"/>
    </location>
</feature>
<feature type="region of interest" description="Disordered" evidence="3">
    <location>
        <begin position="1"/>
        <end position="22"/>
    </location>
</feature>
<feature type="region of interest" description="Disordered" evidence="3">
    <location>
        <begin position="225"/>
        <end position="274"/>
    </location>
</feature>
<protein>
    <recommendedName>
        <fullName evidence="2">Large ribosomal subunit protein uL2c</fullName>
    </recommendedName>
    <alternativeName>
        <fullName evidence="4">50S ribosomal protein L2, chloroplastic</fullName>
    </alternativeName>
</protein>
<geneLocation type="chloroplast"/>
<comment type="subunit">
    <text evidence="1">Part of the 50S ribosomal subunit.</text>
</comment>
<comment type="subcellular location">
    <subcellularLocation>
        <location>Plastid</location>
        <location>Chloroplast</location>
    </subcellularLocation>
</comment>
<comment type="similarity">
    <text evidence="4">Belongs to the universal ribosomal protein uL2 family.</text>
</comment>
<reference key="1">
    <citation type="submission" date="2004-08" db="EMBL/GenBank/DDBJ databases">
        <title>A partial chloroplast genome of Silene latifolia.</title>
        <authorList>
            <person name="Kejnovsky E."/>
            <person name="Kubat Z."/>
            <person name="Hobza R."/>
            <person name="Lengerova M."/>
            <person name="Sato S."/>
            <person name="Tabata S."/>
            <person name="Fukui K."/>
            <person name="Matsunaga S."/>
            <person name="Vyskot B."/>
        </authorList>
    </citation>
    <scope>NUCLEOTIDE SEQUENCE [GENOMIC DNA]</scope>
</reference>
<proteinExistence type="inferred from homology"/>
<organism>
    <name type="scientific">Silene latifolia</name>
    <name type="common">White campion</name>
    <name type="synonym">Bladder campion</name>
    <dbReference type="NCBI Taxonomy" id="37657"/>
    <lineage>
        <taxon>Eukaryota</taxon>
        <taxon>Viridiplantae</taxon>
        <taxon>Streptophyta</taxon>
        <taxon>Embryophyta</taxon>
        <taxon>Tracheophyta</taxon>
        <taxon>Spermatophyta</taxon>
        <taxon>Magnoliopsida</taxon>
        <taxon>eudicotyledons</taxon>
        <taxon>Gunneridae</taxon>
        <taxon>Pentapetalae</taxon>
        <taxon>Caryophyllales</taxon>
        <taxon>Caryophyllaceae</taxon>
        <taxon>Sileneae</taxon>
        <taxon>Silene</taxon>
        <taxon>Silene subgen. Behenantha</taxon>
        <taxon>Silene sect. Melandrium</taxon>
    </lineage>
</organism>
<accession>Q589A7</accession>
<gene>
    <name type="primary">rpl2</name>
</gene>
<name>RK2_SILLA</name>